<evidence type="ECO:0000255" key="1">
    <source>
        <dbReference type="HAMAP-Rule" id="MF_00361"/>
    </source>
</evidence>
<name>NADK_FRATO</name>
<proteinExistence type="inferred from homology"/>
<comment type="function">
    <text evidence="1">Involved in the regulation of the intracellular balance of NAD and NADP, and is a key enzyme in the biosynthesis of NADP. Catalyzes specifically the phosphorylation on 2'-hydroxyl of the adenosine moiety of NAD to yield NADP.</text>
</comment>
<comment type="catalytic activity">
    <reaction evidence="1">
        <text>NAD(+) + ATP = ADP + NADP(+) + H(+)</text>
        <dbReference type="Rhea" id="RHEA:18629"/>
        <dbReference type="ChEBI" id="CHEBI:15378"/>
        <dbReference type="ChEBI" id="CHEBI:30616"/>
        <dbReference type="ChEBI" id="CHEBI:57540"/>
        <dbReference type="ChEBI" id="CHEBI:58349"/>
        <dbReference type="ChEBI" id="CHEBI:456216"/>
        <dbReference type="EC" id="2.7.1.23"/>
    </reaction>
</comment>
<comment type="cofactor">
    <cofactor evidence="1">
        <name>a divalent metal cation</name>
        <dbReference type="ChEBI" id="CHEBI:60240"/>
    </cofactor>
</comment>
<comment type="subcellular location">
    <subcellularLocation>
        <location evidence="1">Cytoplasm</location>
    </subcellularLocation>
</comment>
<comment type="similarity">
    <text evidence="1">Belongs to the NAD kinase family.</text>
</comment>
<dbReference type="EC" id="2.7.1.23" evidence="1"/>
<dbReference type="EMBL" id="CP000437">
    <property type="protein sequence ID" value="ABI82587.1"/>
    <property type="molecule type" value="Genomic_DNA"/>
</dbReference>
<dbReference type="RefSeq" id="WP_003015031.1">
    <property type="nucleotide sequence ID" value="NC_017463.1"/>
</dbReference>
<dbReference type="SMR" id="Q0BMU7"/>
<dbReference type="KEGG" id="fth:FTH_0629"/>
<dbReference type="GO" id="GO:0005737">
    <property type="term" value="C:cytoplasm"/>
    <property type="evidence" value="ECO:0007669"/>
    <property type="project" value="UniProtKB-SubCell"/>
</dbReference>
<dbReference type="GO" id="GO:0005524">
    <property type="term" value="F:ATP binding"/>
    <property type="evidence" value="ECO:0007669"/>
    <property type="project" value="UniProtKB-KW"/>
</dbReference>
<dbReference type="GO" id="GO:0046872">
    <property type="term" value="F:metal ion binding"/>
    <property type="evidence" value="ECO:0007669"/>
    <property type="project" value="UniProtKB-UniRule"/>
</dbReference>
<dbReference type="GO" id="GO:0051287">
    <property type="term" value="F:NAD binding"/>
    <property type="evidence" value="ECO:0007669"/>
    <property type="project" value="UniProtKB-ARBA"/>
</dbReference>
<dbReference type="GO" id="GO:0003951">
    <property type="term" value="F:NAD+ kinase activity"/>
    <property type="evidence" value="ECO:0007669"/>
    <property type="project" value="UniProtKB-UniRule"/>
</dbReference>
<dbReference type="GO" id="GO:0019674">
    <property type="term" value="P:NAD metabolic process"/>
    <property type="evidence" value="ECO:0007669"/>
    <property type="project" value="InterPro"/>
</dbReference>
<dbReference type="GO" id="GO:0006741">
    <property type="term" value="P:NADP biosynthetic process"/>
    <property type="evidence" value="ECO:0007669"/>
    <property type="project" value="UniProtKB-UniRule"/>
</dbReference>
<dbReference type="Gene3D" id="3.40.50.10330">
    <property type="entry name" value="Probable inorganic polyphosphate/atp-NAD kinase, domain 1"/>
    <property type="match status" value="1"/>
</dbReference>
<dbReference type="Gene3D" id="2.60.200.30">
    <property type="entry name" value="Probable inorganic polyphosphate/atp-NAD kinase, domain 2"/>
    <property type="match status" value="1"/>
</dbReference>
<dbReference type="HAMAP" id="MF_00361">
    <property type="entry name" value="NAD_kinase"/>
    <property type="match status" value="1"/>
</dbReference>
<dbReference type="InterPro" id="IPR017438">
    <property type="entry name" value="ATP-NAD_kinase_N"/>
</dbReference>
<dbReference type="InterPro" id="IPR017437">
    <property type="entry name" value="ATP-NAD_kinase_PpnK-typ_C"/>
</dbReference>
<dbReference type="InterPro" id="IPR016064">
    <property type="entry name" value="NAD/diacylglycerol_kinase_sf"/>
</dbReference>
<dbReference type="InterPro" id="IPR002504">
    <property type="entry name" value="NADK"/>
</dbReference>
<dbReference type="PANTHER" id="PTHR20275">
    <property type="entry name" value="NAD KINASE"/>
    <property type="match status" value="1"/>
</dbReference>
<dbReference type="PANTHER" id="PTHR20275:SF0">
    <property type="entry name" value="NAD KINASE"/>
    <property type="match status" value="1"/>
</dbReference>
<dbReference type="Pfam" id="PF01513">
    <property type="entry name" value="NAD_kinase"/>
    <property type="match status" value="1"/>
</dbReference>
<dbReference type="Pfam" id="PF20143">
    <property type="entry name" value="NAD_kinase_C"/>
    <property type="match status" value="1"/>
</dbReference>
<dbReference type="SUPFAM" id="SSF111331">
    <property type="entry name" value="NAD kinase/diacylglycerol kinase-like"/>
    <property type="match status" value="1"/>
</dbReference>
<keyword id="KW-0067">ATP-binding</keyword>
<keyword id="KW-0963">Cytoplasm</keyword>
<keyword id="KW-0418">Kinase</keyword>
<keyword id="KW-0520">NAD</keyword>
<keyword id="KW-0521">NADP</keyword>
<keyword id="KW-0547">Nucleotide-binding</keyword>
<keyword id="KW-0808">Transferase</keyword>
<gene>
    <name evidence="1" type="primary">nadK</name>
    <name type="ordered locus">FTH_0629</name>
</gene>
<accession>Q0BMU7</accession>
<organism>
    <name type="scientific">Francisella tularensis subsp. holarctica (strain OSU18)</name>
    <dbReference type="NCBI Taxonomy" id="393011"/>
    <lineage>
        <taxon>Bacteria</taxon>
        <taxon>Pseudomonadati</taxon>
        <taxon>Pseudomonadota</taxon>
        <taxon>Gammaproteobacteria</taxon>
        <taxon>Thiotrichales</taxon>
        <taxon>Francisellaceae</taxon>
        <taxon>Francisella</taxon>
    </lineage>
</organism>
<protein>
    <recommendedName>
        <fullName evidence="1">NAD kinase</fullName>
        <ecNumber evidence="1">2.7.1.23</ecNumber>
    </recommendedName>
    <alternativeName>
        <fullName evidence="1">ATP-dependent NAD kinase</fullName>
    </alternativeName>
</protein>
<sequence>MAFKYHKVAIVGKHYKKEVSQMVETLYAYLQQQGLEIIVENDTAADTSLVNVAIASLKEIALRCDVAIVVGGDGNFLKASRLLALYSNIPVIGINKGKLGFLTTLAADDNALKNDLYAILKGDSSVTKMSMLKCRVDNNLRAPLEASIALNEIAITASRGLMFGLKVFIDGRYAFDQRGDGLIVSTPTGSTAHAMSAGGPILNPNQNSVVLVPICSHSLNSRPLVISDESVIDIYITDYNDPEPVLSIDGRHDTILKAHQKVTIQKARKKVTVLHTKDYNYYDTLREKLGWSKVLF</sequence>
<feature type="chain" id="PRO_1000005410" description="NAD kinase">
    <location>
        <begin position="1"/>
        <end position="296"/>
    </location>
</feature>
<feature type="active site" description="Proton acceptor" evidence="1">
    <location>
        <position position="73"/>
    </location>
</feature>
<feature type="binding site" evidence="1">
    <location>
        <begin position="73"/>
        <end position="74"/>
    </location>
    <ligand>
        <name>NAD(+)</name>
        <dbReference type="ChEBI" id="CHEBI:57540"/>
    </ligand>
</feature>
<feature type="binding site" evidence="1">
    <location>
        <position position="78"/>
    </location>
    <ligand>
        <name>NAD(+)</name>
        <dbReference type="ChEBI" id="CHEBI:57540"/>
    </ligand>
</feature>
<feature type="binding site" evidence="1">
    <location>
        <begin position="151"/>
        <end position="152"/>
    </location>
    <ligand>
        <name>NAD(+)</name>
        <dbReference type="ChEBI" id="CHEBI:57540"/>
    </ligand>
</feature>
<feature type="binding site" evidence="1">
    <location>
        <position position="178"/>
    </location>
    <ligand>
        <name>NAD(+)</name>
        <dbReference type="ChEBI" id="CHEBI:57540"/>
    </ligand>
</feature>
<feature type="binding site" evidence="1">
    <location>
        <position position="180"/>
    </location>
    <ligand>
        <name>NAD(+)</name>
        <dbReference type="ChEBI" id="CHEBI:57540"/>
    </ligand>
</feature>
<feature type="binding site" evidence="1">
    <location>
        <begin position="191"/>
        <end position="196"/>
    </location>
    <ligand>
        <name>NAD(+)</name>
        <dbReference type="ChEBI" id="CHEBI:57540"/>
    </ligand>
</feature>
<reference key="1">
    <citation type="journal article" date="2006" name="J. Bacteriol.">
        <title>Chromosome rearrangement and diversification of Francisella tularensis revealed by the type B (OSU18) genome sequence.</title>
        <authorList>
            <person name="Petrosino J.F."/>
            <person name="Xiang Q."/>
            <person name="Karpathy S.E."/>
            <person name="Jiang H."/>
            <person name="Yerrapragada S."/>
            <person name="Liu Y."/>
            <person name="Gioia J."/>
            <person name="Hemphill L."/>
            <person name="Gonzalez A."/>
            <person name="Raghavan T.M."/>
            <person name="Uzman A."/>
            <person name="Fox G.E."/>
            <person name="Highlander S."/>
            <person name="Reichard M."/>
            <person name="Morton R.J."/>
            <person name="Clinkenbeard K.D."/>
            <person name="Weinstock G.M."/>
        </authorList>
    </citation>
    <scope>NUCLEOTIDE SEQUENCE [LARGE SCALE GENOMIC DNA]</scope>
    <source>
        <strain>OSU18</strain>
    </source>
</reference>